<proteinExistence type="evidence at protein level"/>
<feature type="chain" id="PRO_0000314301" description="Zinc transporter 7">
    <location>
        <begin position="1"/>
        <end position="378"/>
    </location>
</feature>
<feature type="topological domain" description="Cytoplasmic" evidence="8">
    <location>
        <begin position="1"/>
        <end position="37"/>
    </location>
</feature>
<feature type="transmembrane region" description="Helical" evidence="3">
    <location>
        <begin position="38"/>
        <end position="58"/>
    </location>
</feature>
<feature type="topological domain" description="Lumenal" evidence="8">
    <location>
        <begin position="59"/>
        <end position="67"/>
    </location>
</feature>
<feature type="transmembrane region" description="Helical" evidence="3">
    <location>
        <begin position="68"/>
        <end position="88"/>
    </location>
</feature>
<feature type="topological domain" description="Cytoplasmic" evidence="8">
    <location>
        <begin position="89"/>
        <end position="102"/>
    </location>
</feature>
<feature type="transmembrane region" description="Helical" evidence="3">
    <location>
        <begin position="103"/>
        <end position="123"/>
    </location>
</feature>
<feature type="topological domain" description="Lumenal" evidence="8">
    <location>
        <begin position="124"/>
        <end position="140"/>
    </location>
</feature>
<feature type="transmembrane region" description="Helical" evidence="3">
    <location>
        <begin position="141"/>
        <end position="161"/>
    </location>
</feature>
<feature type="topological domain" description="Cytoplasmic" evidence="8">
    <location>
        <begin position="162"/>
        <end position="238"/>
    </location>
</feature>
<feature type="transmembrane region" description="Helical" evidence="3">
    <location>
        <begin position="239"/>
        <end position="259"/>
    </location>
</feature>
<feature type="topological domain" description="Lumenal" evidence="8">
    <location>
        <begin position="260"/>
        <end position="264"/>
    </location>
</feature>
<feature type="transmembrane region" description="Helical" evidence="3">
    <location>
        <begin position="265"/>
        <end position="285"/>
    </location>
</feature>
<feature type="topological domain" description="Cytoplasmic" evidence="8">
    <location>
        <begin position="286"/>
        <end position="378"/>
    </location>
</feature>
<feature type="region of interest" description="His-rich loop">
    <location>
        <begin position="161"/>
        <end position="220"/>
    </location>
</feature>
<feature type="region of interest" description="Disordered" evidence="4">
    <location>
        <begin position="186"/>
        <end position="228"/>
    </location>
</feature>
<feature type="compositionally biased region" description="Basic and acidic residues" evidence="4">
    <location>
        <begin position="204"/>
        <end position="224"/>
    </location>
</feature>
<reference key="1">
    <citation type="submission" date="2006-02" db="EMBL/GenBank/DDBJ databases">
        <title>Expression profile of mRNAs from rat insulinoma cell line (RIN).</title>
        <authorList>
            <person name="Takeda J."/>
            <person name="Wang H."/>
            <person name="Horikawa Y."/>
        </authorList>
    </citation>
    <scope>NUCLEOTIDE SEQUENCE [LARGE SCALE MRNA] OF 1-190</scope>
</reference>
<reference key="2">
    <citation type="journal article" date="2004" name="Genome Res.">
        <title>The status, quality, and expansion of the NIH full-length cDNA project: the Mammalian Gene Collection (MGC).</title>
        <authorList>
            <consortium name="The MGC Project Team"/>
        </authorList>
    </citation>
    <scope>NUCLEOTIDE SEQUENCE [LARGE SCALE MRNA] OF 165-378</scope>
    <source>
        <tissue>Ovary</tissue>
        <tissue>Spleen</tissue>
    </source>
</reference>
<reference key="3">
    <citation type="journal article" date="2017" name="Diabetes">
        <title>Hyperglycemia-Induced Changes in ZIP7 and ZnT7 Expression Cause Zn2+ Release From the Sarco(endo)plasmic Reticulum and Mediate ER Stress in the Heart.</title>
        <authorList>
            <person name="Tuncay E."/>
            <person name="Bitirim V.C."/>
            <person name="Durak A."/>
            <person name="Carrat G.R.J."/>
            <person name="Taylor K.M."/>
            <person name="Rutter G.A."/>
            <person name="Turan B."/>
        </authorList>
    </citation>
    <scope>SUBCELLULAR LOCATION</scope>
    <scope>INDUCTION</scope>
</reference>
<reference key="4">
    <citation type="journal article" date="2019" name="Mitochondrion">
        <title>Zn2+-transporters ZIP7 and ZnT7 play important role in progression of cardiac dysfunction via affecting sarco(endo)plasmic reticulum-mitochondria coupling in hyperglycemic cardiomyocytes.</title>
        <authorList>
            <person name="Tuncay E."/>
            <person name="Bitirim C.V."/>
            <person name="Olgar Y."/>
            <person name="Durak A."/>
            <person name="Rutter G.A."/>
            <person name="Turan B."/>
        </authorList>
    </citation>
    <scope>SUBCELLULAR LOCATION</scope>
</reference>
<comment type="function">
    <text evidence="1">Zinc ion transporter mediating zinc entry from the cytosol into the lumen of organelles along the secretory pathway. By contributing to zinc ion homeostasis within the early secretory pathway, regulates the activation and folding of enzymes like alkaline phosphatases.</text>
</comment>
<comment type="catalytic activity">
    <reaction evidence="1">
        <text>Zn(2+)(in) = Zn(2+)(out)</text>
        <dbReference type="Rhea" id="RHEA:29351"/>
        <dbReference type="ChEBI" id="CHEBI:29105"/>
    </reaction>
</comment>
<comment type="subunit">
    <text evidence="1">Homooligomer.</text>
</comment>
<comment type="subcellular location">
    <subcellularLocation>
        <location evidence="5">Golgi apparatus membrane</location>
        <topology evidence="3">Multi-pass membrane protein</topology>
    </subcellularLocation>
    <subcellularLocation>
        <location evidence="2">Cytoplasmic vesicle</location>
    </subcellularLocation>
    <subcellularLocation>
        <location evidence="2">Golgi apparatus</location>
        <location evidence="2">trans-Golgi network</location>
    </subcellularLocation>
    <subcellularLocation>
        <location evidence="5">Sarcoplasmic reticulum</location>
    </subcellularLocation>
    <subcellularLocation>
        <location evidence="6">Mitochondrion</location>
    </subcellularLocation>
</comment>
<comment type="induction">
    <text evidence="5">Down-regulated by glucose (at protein level).</text>
</comment>
<comment type="similarity">
    <text evidence="8">Belongs to the cation diffusion facilitator (CDF) transporter (TC 2.A.4) family. SLC30A subfamily.</text>
</comment>
<dbReference type="EMBL" id="BP503381">
    <property type="status" value="NOT_ANNOTATED_CDS"/>
    <property type="molecule type" value="mRNA"/>
</dbReference>
<dbReference type="EMBL" id="BC091417">
    <property type="protein sequence ID" value="AAH91417.1"/>
    <property type="molecule type" value="mRNA"/>
</dbReference>
<dbReference type="EMBL" id="BC107441">
    <property type="protein sequence ID" value="AAI07442.1"/>
    <property type="molecule type" value="mRNA"/>
</dbReference>
<dbReference type="RefSeq" id="NP_001178644.1">
    <property type="nucleotide sequence ID" value="NM_001191715.1"/>
</dbReference>
<dbReference type="SMR" id="Q5BJM8"/>
<dbReference type="FunCoup" id="Q5BJM8">
    <property type="interactions" value="2598"/>
</dbReference>
<dbReference type="IntAct" id="Q5BJM8">
    <property type="interactions" value="1"/>
</dbReference>
<dbReference type="STRING" id="10116.ENSRNOP00000019172"/>
<dbReference type="PhosphoSitePlus" id="Q5BJM8"/>
<dbReference type="jPOST" id="Q5BJM8"/>
<dbReference type="PaxDb" id="10116-ENSRNOP00000019172"/>
<dbReference type="Ensembl" id="ENSRNOT00000019172.6">
    <property type="protein sequence ID" value="ENSRNOP00000019172.4"/>
    <property type="gene ID" value="ENSRNOG00000013912.6"/>
</dbReference>
<dbReference type="GeneID" id="310801"/>
<dbReference type="KEGG" id="rno:310801"/>
<dbReference type="UCSC" id="RGD:1307873">
    <property type="organism name" value="rat"/>
</dbReference>
<dbReference type="AGR" id="RGD:1307873"/>
<dbReference type="CTD" id="148867"/>
<dbReference type="RGD" id="1307873">
    <property type="gene designation" value="Slc30a7"/>
</dbReference>
<dbReference type="eggNOG" id="KOG1484">
    <property type="taxonomic scope" value="Eukaryota"/>
</dbReference>
<dbReference type="GeneTree" id="ENSGT00940000159571"/>
<dbReference type="HOGENOM" id="CLU_013430_0_3_1"/>
<dbReference type="InParanoid" id="Q5BJM8"/>
<dbReference type="OMA" id="KWRANER"/>
<dbReference type="OrthoDB" id="78669at2759"/>
<dbReference type="PhylomeDB" id="Q5BJM8"/>
<dbReference type="TreeFam" id="TF315217"/>
<dbReference type="PRO" id="PR:Q5BJM8"/>
<dbReference type="Proteomes" id="UP000002494">
    <property type="component" value="Chromosome 2"/>
</dbReference>
<dbReference type="Bgee" id="ENSRNOG00000013912">
    <property type="expression patterns" value="Expressed in jejunum and 18 other cell types or tissues"/>
</dbReference>
<dbReference type="GO" id="GO:0005737">
    <property type="term" value="C:cytoplasm"/>
    <property type="evidence" value="ECO:0000266"/>
    <property type="project" value="RGD"/>
</dbReference>
<dbReference type="GO" id="GO:0031410">
    <property type="term" value="C:cytoplasmic vesicle"/>
    <property type="evidence" value="ECO:0000266"/>
    <property type="project" value="RGD"/>
</dbReference>
<dbReference type="GO" id="GO:0005794">
    <property type="term" value="C:Golgi apparatus"/>
    <property type="evidence" value="ECO:0000266"/>
    <property type="project" value="RGD"/>
</dbReference>
<dbReference type="GO" id="GO:1990674">
    <property type="term" value="C:Golgi cis cisterna membrane"/>
    <property type="evidence" value="ECO:0000314"/>
    <property type="project" value="UniProtKB"/>
</dbReference>
<dbReference type="GO" id="GO:0000139">
    <property type="term" value="C:Golgi membrane"/>
    <property type="evidence" value="ECO:0007669"/>
    <property type="project" value="UniProtKB-SubCell"/>
</dbReference>
<dbReference type="GO" id="GO:0005739">
    <property type="term" value="C:mitochondrion"/>
    <property type="evidence" value="ECO:0000314"/>
    <property type="project" value="UniProtKB"/>
</dbReference>
<dbReference type="GO" id="GO:0048471">
    <property type="term" value="C:perinuclear region of cytoplasm"/>
    <property type="evidence" value="ECO:0000266"/>
    <property type="project" value="RGD"/>
</dbReference>
<dbReference type="GO" id="GO:0033017">
    <property type="term" value="C:sarcoplasmic reticulum membrane"/>
    <property type="evidence" value="ECO:0000314"/>
    <property type="project" value="UniProtKB"/>
</dbReference>
<dbReference type="GO" id="GO:0031982">
    <property type="term" value="C:vesicle"/>
    <property type="evidence" value="ECO:0000266"/>
    <property type="project" value="RGD"/>
</dbReference>
<dbReference type="GO" id="GO:0042802">
    <property type="term" value="F:identical protein binding"/>
    <property type="evidence" value="ECO:0000266"/>
    <property type="project" value="RGD"/>
</dbReference>
<dbReference type="GO" id="GO:0005385">
    <property type="term" value="F:zinc ion transmembrane transporter activity"/>
    <property type="evidence" value="ECO:0000250"/>
    <property type="project" value="UniProtKB"/>
</dbReference>
<dbReference type="GO" id="GO:0006882">
    <property type="term" value="P:intracellular zinc ion homeostasis"/>
    <property type="evidence" value="ECO:0000266"/>
    <property type="project" value="RGD"/>
</dbReference>
<dbReference type="GO" id="GO:1904257">
    <property type="term" value="P:zinc ion import into Golgi lumen"/>
    <property type="evidence" value="ECO:0000250"/>
    <property type="project" value="UniProtKB"/>
</dbReference>
<dbReference type="GO" id="GO:0006829">
    <property type="term" value="P:zinc ion transport"/>
    <property type="evidence" value="ECO:0000266"/>
    <property type="project" value="RGD"/>
</dbReference>
<dbReference type="Gene3D" id="1.20.1510.10">
    <property type="entry name" value="Cation efflux protein transmembrane domain"/>
    <property type="match status" value="1"/>
</dbReference>
<dbReference type="InterPro" id="IPR002524">
    <property type="entry name" value="Cation_efflux"/>
</dbReference>
<dbReference type="InterPro" id="IPR027469">
    <property type="entry name" value="Cation_efflux_TMD_sf"/>
</dbReference>
<dbReference type="InterPro" id="IPR045316">
    <property type="entry name" value="Msc2-like"/>
</dbReference>
<dbReference type="NCBIfam" id="TIGR01297">
    <property type="entry name" value="CDF"/>
    <property type="match status" value="1"/>
</dbReference>
<dbReference type="PANTHER" id="PTHR45755">
    <property type="match status" value="1"/>
</dbReference>
<dbReference type="PANTHER" id="PTHR45755:SF4">
    <property type="entry name" value="ZINC TRANSPORTER 7"/>
    <property type="match status" value="1"/>
</dbReference>
<dbReference type="Pfam" id="PF01545">
    <property type="entry name" value="Cation_efflux"/>
    <property type="match status" value="1"/>
</dbReference>
<dbReference type="SUPFAM" id="SSF161111">
    <property type="entry name" value="Cation efflux protein transmembrane domain-like"/>
    <property type="match status" value="1"/>
</dbReference>
<evidence type="ECO:0000250" key="1">
    <source>
        <dbReference type="UniProtKB" id="Q8NEW0"/>
    </source>
</evidence>
<evidence type="ECO:0000250" key="2">
    <source>
        <dbReference type="UniProtKB" id="Q9JKN1"/>
    </source>
</evidence>
<evidence type="ECO:0000255" key="3"/>
<evidence type="ECO:0000256" key="4">
    <source>
        <dbReference type="SAM" id="MobiDB-lite"/>
    </source>
</evidence>
<evidence type="ECO:0000269" key="5">
    <source>
    </source>
</evidence>
<evidence type="ECO:0000269" key="6">
    <source>
    </source>
</evidence>
<evidence type="ECO:0000303" key="7">
    <source>
    </source>
</evidence>
<evidence type="ECO:0000305" key="8"/>
<evidence type="ECO:0000305" key="9">
    <source>
    </source>
</evidence>
<evidence type="ECO:0000312" key="10">
    <source>
        <dbReference type="RGD" id="1307873"/>
    </source>
</evidence>
<name>ZNT7_RAT</name>
<accession>Q5BJM8</accession>
<organism>
    <name type="scientific">Rattus norvegicus</name>
    <name type="common">Rat</name>
    <dbReference type="NCBI Taxonomy" id="10116"/>
    <lineage>
        <taxon>Eukaryota</taxon>
        <taxon>Metazoa</taxon>
        <taxon>Chordata</taxon>
        <taxon>Craniata</taxon>
        <taxon>Vertebrata</taxon>
        <taxon>Euteleostomi</taxon>
        <taxon>Mammalia</taxon>
        <taxon>Eutheria</taxon>
        <taxon>Euarchontoglires</taxon>
        <taxon>Glires</taxon>
        <taxon>Rodentia</taxon>
        <taxon>Myomorpha</taxon>
        <taxon>Muroidea</taxon>
        <taxon>Muridae</taxon>
        <taxon>Murinae</taxon>
        <taxon>Rattus</taxon>
    </lineage>
</organism>
<gene>
    <name evidence="10" type="primary">Slc30a7</name>
    <name evidence="7" type="synonym">Znt7</name>
</gene>
<keyword id="KW-0968">Cytoplasmic vesicle</keyword>
<keyword id="KW-0333">Golgi apparatus</keyword>
<keyword id="KW-0406">Ion transport</keyword>
<keyword id="KW-0472">Membrane</keyword>
<keyword id="KW-0496">Mitochondrion</keyword>
<keyword id="KW-1185">Reference proteome</keyword>
<keyword id="KW-0703">Sarcoplasmic reticulum</keyword>
<keyword id="KW-0812">Transmembrane</keyword>
<keyword id="KW-1133">Transmembrane helix</keyword>
<keyword id="KW-0813">Transport</keyword>
<keyword id="KW-0862">Zinc</keyword>
<keyword id="KW-0864">Zinc transport</keyword>
<protein>
    <recommendedName>
        <fullName evidence="9">Zinc transporter 7</fullName>
    </recommendedName>
    <alternativeName>
        <fullName evidence="10">Solute carrier family 30 member 7</fullName>
    </alternativeName>
</protein>
<sequence length="378" mass="41774">MLPLSIKDDEYKPPKFNLFGKISGWFRSILSDKTSRNLFFFLCLNLSFAFVELLYGIWSNCLGLISDSFHMFFDSTAILAGLAASVISKWRDNDAFSYGYVRAEVLAGFVNGLFLIFTAFFIFSEGVERALAPPDVHHERLLLVSILGFVVNLVGIFVFNHGGHGHSHGSGHGHSHSLFNGALDHSHGHEDHCHSHGAKHGGAHSHDHDHAHGHGHLHSHDGPSFKETAGPSRQILQGVFLHILADTLGSIGVIASAIMMQNFGLMIADPICSILIAILIVVSVIPLLRESIGILMQRTPPSLENVLPQCYQRVQQLQGVYNLQEQHFWTLCSDVYVGTLKLVVAPDADARWILSQTHNIFTQAGVRQLYVQIDFAAM</sequence>